<sequence length="381" mass="42295">MSKTFARSSLCALSMTIMTAHAAEPPTNLDKPEGRLDIIAWPGYIERGQTDKQYDWVTQFEKETGCAVNVKTAATSDEMVSLMTKGGYDLVTASGDASLRLIMGKRVQPINTALIPNWKTLDPRVVKGDWFNVGGKVYGTPYQWGPNLLMYNTKTFPTPPDSWQVVFVEQNLPDGKSNKGRVQAYDGPIYIADAALFVKATQPQLGISDPYQLTEEQYQAVLKVLRAQHSLIHRYWHDTTVQMSDFKNEGVVASSAWPYQANALKAEGQPVATVFPKEGVTGWADTTMLHSEAKHPVCAYKWMNWSLTPKVQGDVAAWFGSLPVVPEGCKASPLLGEKGCETNGFNYFDKIAFWKTPIAEGGKFVPYSRWTQDYIAIMGGR</sequence>
<accession>P76108</accession>
<accession>Q2MBB6</accession>
<keyword id="KW-0012">Acyltransferase</keyword>
<keyword id="KW-0574">Periplasm</keyword>
<keyword id="KW-0583">PHB biosynthesis</keyword>
<keyword id="KW-1185">Reference proteome</keyword>
<keyword id="KW-0732">Signal</keyword>
<keyword id="KW-0808">Transferase</keyword>
<keyword id="KW-0813">Transport</keyword>
<gene>
    <name type="primary">ydcS</name>
    <name type="ordered locus">b1440</name>
    <name type="ordered locus">JW1435</name>
</gene>
<comment type="function">
    <text evidence="2 4 7">Catalyzes the formation of short polymers of R-3-hydroxybutyrate (cPHB) (PubMed:18640095). Involved in natural transformation (PubMed:26826386). Probably part of the ABC transporter complex YdcSTUV. During natural transformation, may bind dsDNA and convey it to the inner membrane channel formed by YdcV (Probable).</text>
</comment>
<comment type="catalytic activity">
    <reaction evidence="2">
        <text>(3R)-3-hydroxybutanoyl-CoA + [(3R)-hydroxybutanoate](n) = [(3R)-hydroxybutanoate](n+1) + CoA</text>
        <dbReference type="Rhea" id="RHEA:15405"/>
        <dbReference type="Rhea" id="RHEA-COMP:14464"/>
        <dbReference type="Rhea" id="RHEA-COMP:14465"/>
        <dbReference type="ChEBI" id="CHEBI:8298"/>
        <dbReference type="ChEBI" id="CHEBI:57287"/>
        <dbReference type="ChEBI" id="CHEBI:57315"/>
    </reaction>
</comment>
<comment type="biophysicochemical properties">
    <kinetics>
        <KM evidence="2">0.14 mM for 3-hydroxybutyryl-CoA</KM>
        <Vmax evidence="2">18.7 nmol/min/mg enzyme</Vmax>
    </kinetics>
    <phDependence>
        <text evidence="2">Optimum pH is 6.8-7.8.</text>
    </phDependence>
    <temperatureDependence>
        <text evidence="2">Optimum temperature is 37 degrees Celsius.</text>
    </temperatureDependence>
</comment>
<comment type="subcellular location">
    <subcellularLocation>
        <location evidence="2">Periplasm</location>
    </subcellularLocation>
</comment>
<comment type="induction">
    <text evidence="3">Induced under nitrogen-limited growth.</text>
</comment>
<comment type="disruption phenotype">
    <text evidence="2 4">The deletion mutant contains 30% less cPHB in the outer membrane than the wild-type strain (PubMed:18640095). Natural transformation rate of the mutant is reduced by 2.7-6.7 folds. Mutant is also defective in chemical transformation (PubMed:26826386).</text>
</comment>
<comment type="similarity">
    <text evidence="6">Belongs to the bacterial solute-binding protein PotD/PotF family.</text>
</comment>
<protein>
    <recommendedName>
        <fullName evidence="6">Bifunctional polyhydroxybutyrate synthase / ABC transporter periplasmic binding protein</fullName>
    </recommendedName>
    <alternativeName>
        <fullName evidence="5">Poly-3-hydroxybutyrate synthase</fullName>
        <shortName evidence="5">PHB synthase</shortName>
        <ecNumber evidence="2">2.3.1.-</ecNumber>
    </alternativeName>
    <alternativeName>
        <fullName evidence="5">cPHB synthase</fullName>
    </alternativeName>
</protein>
<reference key="1">
    <citation type="journal article" date="1997" name="Science">
        <title>The complete genome sequence of Escherichia coli K-12.</title>
        <authorList>
            <person name="Blattner F.R."/>
            <person name="Plunkett G. III"/>
            <person name="Bloch C.A."/>
            <person name="Perna N.T."/>
            <person name="Burland V."/>
            <person name="Riley M."/>
            <person name="Collado-Vides J."/>
            <person name="Glasner J.D."/>
            <person name="Rode C.K."/>
            <person name="Mayhew G.F."/>
            <person name="Gregor J."/>
            <person name="Davis N.W."/>
            <person name="Kirkpatrick H.A."/>
            <person name="Goeden M.A."/>
            <person name="Rose D.J."/>
            <person name="Mau B."/>
            <person name="Shao Y."/>
        </authorList>
    </citation>
    <scope>NUCLEOTIDE SEQUENCE [LARGE SCALE GENOMIC DNA]</scope>
    <source>
        <strain>K12 / MG1655 / ATCC 47076</strain>
    </source>
</reference>
<reference key="2">
    <citation type="journal article" date="2006" name="Mol. Syst. Biol.">
        <title>Highly accurate genome sequences of Escherichia coli K-12 strains MG1655 and W3110.</title>
        <authorList>
            <person name="Hayashi K."/>
            <person name="Morooka N."/>
            <person name="Yamamoto Y."/>
            <person name="Fujita K."/>
            <person name="Isono K."/>
            <person name="Choi S."/>
            <person name="Ohtsubo E."/>
            <person name="Baba T."/>
            <person name="Wanner B.L."/>
            <person name="Mori H."/>
            <person name="Horiuchi T."/>
        </authorList>
    </citation>
    <scope>NUCLEOTIDE SEQUENCE [LARGE SCALE GENOMIC DNA]</scope>
    <source>
        <strain>K12 / W3110 / ATCC 27325 / DSM 5911</strain>
    </source>
</reference>
<reference key="3">
    <citation type="journal article" date="2008" name="Biochem. Biophys. Res. Commun.">
        <title>Poly-3-hydroxybutyrate synthase from the periplasm of Escherichia coli.</title>
        <authorList>
            <person name="Dai D."/>
            <person name="Reusch R.N."/>
        </authorList>
    </citation>
    <scope>FUNCTION AS A PHB SYNTHASE</scope>
    <scope>CATALYTIC ACTIVITY</scope>
    <scope>BIOPHYSICOCHEMICAL PROPERTIES</scope>
    <scope>SUBCELLULAR LOCATION</scope>
    <scope>DISRUPTION PHENOTYPE</scope>
</reference>
<reference key="4">
    <citation type="journal article" date="2013" name="Mol. Microbiol.">
        <title>Putrescine catabolism is a metabolic response to several stresses in Escherichia coli.</title>
        <authorList>
            <person name="Schneider B.L."/>
            <person name="Hernandez V.J."/>
            <person name="Reitzer L."/>
        </authorList>
    </citation>
    <scope>INDUCTION</scope>
    <source>
        <strain>K12 / W3110 / ATCC 27325 / DSM 5911</strain>
    </source>
</reference>
<reference key="5">
    <citation type="journal article" date="2016" name="Biochem. Biophys. Res. Commun.">
        <title>Two different routes for double-stranded DNA transfer in natural and artificial transformation of Escherichia coli.</title>
        <authorList>
            <person name="Sun D."/>
        </authorList>
    </citation>
    <scope>FUNCTION IN TRANSFORMATION</scope>
    <scope>DISRUPTION PHENOTYPE</scope>
</reference>
<evidence type="ECO:0000255" key="1"/>
<evidence type="ECO:0000269" key="2">
    <source>
    </source>
</evidence>
<evidence type="ECO:0000269" key="3">
    <source>
    </source>
</evidence>
<evidence type="ECO:0000269" key="4">
    <source>
    </source>
</evidence>
<evidence type="ECO:0000303" key="5">
    <source>
    </source>
</evidence>
<evidence type="ECO:0000305" key="6"/>
<evidence type="ECO:0000305" key="7">
    <source>
    </source>
</evidence>
<organism>
    <name type="scientific">Escherichia coli (strain K12)</name>
    <dbReference type="NCBI Taxonomy" id="83333"/>
    <lineage>
        <taxon>Bacteria</taxon>
        <taxon>Pseudomonadati</taxon>
        <taxon>Pseudomonadota</taxon>
        <taxon>Gammaproteobacteria</taxon>
        <taxon>Enterobacterales</taxon>
        <taxon>Enterobacteriaceae</taxon>
        <taxon>Escherichia</taxon>
    </lineage>
</organism>
<name>YDCS_ECOLI</name>
<feature type="signal peptide" evidence="1">
    <location>
        <begin position="1"/>
        <end position="22"/>
    </location>
</feature>
<feature type="chain" id="PRO_0000031843" description="Bifunctional polyhydroxybutyrate synthase / ABC transporter periplasmic binding protein">
    <location>
        <begin position="23"/>
        <end position="381"/>
    </location>
</feature>
<proteinExistence type="evidence at protein level"/>
<dbReference type="EC" id="2.3.1.-" evidence="2"/>
<dbReference type="EMBL" id="U00096">
    <property type="protein sequence ID" value="AAC74522.1"/>
    <property type="molecule type" value="Genomic_DNA"/>
</dbReference>
<dbReference type="EMBL" id="AP009048">
    <property type="protein sequence ID" value="BAE76440.1"/>
    <property type="molecule type" value="Genomic_DNA"/>
</dbReference>
<dbReference type="PIR" id="C64896">
    <property type="entry name" value="C64896"/>
</dbReference>
<dbReference type="RefSeq" id="NP_415957.1">
    <property type="nucleotide sequence ID" value="NC_000913.3"/>
</dbReference>
<dbReference type="RefSeq" id="WP_000047424.1">
    <property type="nucleotide sequence ID" value="NZ_SSZK01000021.1"/>
</dbReference>
<dbReference type="SMR" id="P76108"/>
<dbReference type="BioGRID" id="4262896">
    <property type="interactions" value="74"/>
</dbReference>
<dbReference type="ComplexPortal" id="CPX-4446">
    <property type="entry name" value="YdcSTUV ABC transporter complex"/>
</dbReference>
<dbReference type="FunCoup" id="P76108">
    <property type="interactions" value="205"/>
</dbReference>
<dbReference type="IntAct" id="P76108">
    <property type="interactions" value="19"/>
</dbReference>
<dbReference type="STRING" id="511145.b1440"/>
<dbReference type="TCDB" id="3.A.1.11.9">
    <property type="family name" value="the atp-binding cassette (abc) superfamily"/>
</dbReference>
<dbReference type="jPOST" id="P76108"/>
<dbReference type="PaxDb" id="511145-b1440"/>
<dbReference type="EnsemblBacteria" id="AAC74522">
    <property type="protein sequence ID" value="AAC74522"/>
    <property type="gene ID" value="b1440"/>
</dbReference>
<dbReference type="GeneID" id="75171521"/>
<dbReference type="GeneID" id="946005"/>
<dbReference type="KEGG" id="ecj:JW1435"/>
<dbReference type="KEGG" id="eco:b1440"/>
<dbReference type="KEGG" id="ecoc:C3026_08380"/>
<dbReference type="PATRIC" id="fig|1411691.4.peg.828"/>
<dbReference type="EchoBASE" id="EB3525"/>
<dbReference type="eggNOG" id="COG0687">
    <property type="taxonomic scope" value="Bacteria"/>
</dbReference>
<dbReference type="HOGENOM" id="CLU_026974_1_5_6"/>
<dbReference type="InParanoid" id="P76108"/>
<dbReference type="OMA" id="CAYKWMD"/>
<dbReference type="OrthoDB" id="9813777at2"/>
<dbReference type="PhylomeDB" id="P76108"/>
<dbReference type="BioCyc" id="EcoCyc:YDCS-MONOMER"/>
<dbReference type="BioCyc" id="MetaCyc:YDCS-MONOMER"/>
<dbReference type="PRO" id="PR:P76108"/>
<dbReference type="Proteomes" id="UP000000625">
    <property type="component" value="Chromosome"/>
</dbReference>
<dbReference type="GO" id="GO:0055052">
    <property type="term" value="C:ATP-binding cassette (ABC) transporter complex, substrate-binding subunit-containing"/>
    <property type="evidence" value="ECO:0000303"/>
    <property type="project" value="ComplexPortal"/>
</dbReference>
<dbReference type="GO" id="GO:0016020">
    <property type="term" value="C:membrane"/>
    <property type="evidence" value="ECO:0000303"/>
    <property type="project" value="ComplexPortal"/>
</dbReference>
<dbReference type="GO" id="GO:0030288">
    <property type="term" value="C:outer membrane-bounded periplasmic space"/>
    <property type="evidence" value="ECO:0000314"/>
    <property type="project" value="EcoCyc"/>
</dbReference>
<dbReference type="GO" id="GO:0016746">
    <property type="term" value="F:acyltransferase activity"/>
    <property type="evidence" value="ECO:0007669"/>
    <property type="project" value="UniProtKB-KW"/>
</dbReference>
<dbReference type="GO" id="GO:0019808">
    <property type="term" value="F:polyamine binding"/>
    <property type="evidence" value="ECO:0007669"/>
    <property type="project" value="InterPro"/>
</dbReference>
<dbReference type="GO" id="GO:0009290">
    <property type="term" value="P:DNA import into cell involved in transformation"/>
    <property type="evidence" value="ECO:0000315"/>
    <property type="project" value="EcoCyc"/>
</dbReference>
<dbReference type="GO" id="GO:0042619">
    <property type="term" value="P:poly-hydroxybutyrate biosynthetic process"/>
    <property type="evidence" value="ECO:0000314"/>
    <property type="project" value="EcoCyc"/>
</dbReference>
<dbReference type="GO" id="GO:0015846">
    <property type="term" value="P:polyamine transport"/>
    <property type="evidence" value="ECO:0007669"/>
    <property type="project" value="InterPro"/>
</dbReference>
<dbReference type="GO" id="GO:0055085">
    <property type="term" value="P:transmembrane transport"/>
    <property type="evidence" value="ECO:0000303"/>
    <property type="project" value="ComplexPortal"/>
</dbReference>
<dbReference type="CDD" id="cd13588">
    <property type="entry name" value="PBP2_polyamine_1"/>
    <property type="match status" value="1"/>
</dbReference>
<dbReference type="FunFam" id="3.40.190.10:FF:000080">
    <property type="entry name" value="Spermidine/putrescine ABC transporter substrate-binding protein"/>
    <property type="match status" value="1"/>
</dbReference>
<dbReference type="Gene3D" id="3.40.190.10">
    <property type="entry name" value="Periplasmic binding protein-like II"/>
    <property type="match status" value="2"/>
</dbReference>
<dbReference type="InterPro" id="IPR006059">
    <property type="entry name" value="SBP"/>
</dbReference>
<dbReference type="InterPro" id="IPR001188">
    <property type="entry name" value="Sperm_putr-bd"/>
</dbReference>
<dbReference type="NCBIfam" id="NF041888">
    <property type="entry name" value="ABC_SBP_YdcS"/>
    <property type="match status" value="1"/>
</dbReference>
<dbReference type="PANTHER" id="PTHR30222:SF18">
    <property type="entry name" value="BIFUNCTIONAL POLYHYDROXYBUTYRATE SYNTHASE _ ABC TRANSPORTER PERIPLASMIC BINDING PROTEIN-RELATED"/>
    <property type="match status" value="1"/>
</dbReference>
<dbReference type="PANTHER" id="PTHR30222">
    <property type="entry name" value="SPERMIDINE/PUTRESCINE-BINDING PERIPLASMIC PROTEIN"/>
    <property type="match status" value="1"/>
</dbReference>
<dbReference type="Pfam" id="PF13416">
    <property type="entry name" value="SBP_bac_8"/>
    <property type="match status" value="1"/>
</dbReference>
<dbReference type="PRINTS" id="PR00909">
    <property type="entry name" value="SPERMDNBNDNG"/>
</dbReference>
<dbReference type="SUPFAM" id="SSF53850">
    <property type="entry name" value="Periplasmic binding protein-like II"/>
    <property type="match status" value="1"/>
</dbReference>